<protein>
    <recommendedName>
        <fullName>Adenylate cyclase type 5</fullName>
        <ecNumber evidence="9 11 14">4.6.1.1</ecNumber>
    </recommendedName>
    <alternativeName>
        <fullName>ATP pyrophosphate-lyase 5</fullName>
    </alternativeName>
    <alternativeName>
        <fullName>Adenylate cyclase type V</fullName>
    </alternativeName>
    <alternativeName>
        <fullName>Adenylyl cyclase 5</fullName>
        <shortName evidence="20">AC5</shortName>
    </alternativeName>
</protein>
<proteinExistence type="evidence at protein level"/>
<comment type="function">
    <text evidence="9 11 12 14">Catalyzes the formation of the signaling molecule cAMP in response to G-protein signaling (PubMed:15385642, PubMed:24700542, PubMed:26206488). Mediates signaling downstream of ADRB1 (PubMed:24700542). Regulates the increase of free cytosolic Ca(2+) in response to increased blood glucose levels and contributes to the regulation of Ca(2+)-dependent insulin secretion (PubMed:24740569).</text>
</comment>
<comment type="catalytic activity">
    <reaction evidence="9 11 14">
        <text>ATP = 3',5'-cyclic AMP + diphosphate</text>
        <dbReference type="Rhea" id="RHEA:15389"/>
        <dbReference type="ChEBI" id="CHEBI:30616"/>
        <dbReference type="ChEBI" id="CHEBI:33019"/>
        <dbReference type="ChEBI" id="CHEBI:58165"/>
        <dbReference type="EC" id="4.6.1.1"/>
    </reaction>
</comment>
<comment type="cofactor">
    <cofactor evidence="9">
        <name>Mg(2+)</name>
        <dbReference type="ChEBI" id="CHEBI:18420"/>
    </cofactor>
    <cofactor evidence="9">
        <name>Mn(2+)</name>
        <dbReference type="ChEBI" id="CHEBI:29035"/>
    </cofactor>
    <text evidence="3">Binds 2 magnesium ions per subunit. Is also active with manganese (in vitro).</text>
</comment>
<comment type="activity regulation">
    <text evidence="3 9 11 14">Activated by G(s) G alpha protein GNAS (PubMed:26206488). Inhibited by G(i) G alpha protein GNAI1 (By similarity). Activity is further increased by interaction with the G-protein beta and gamma subunit complex formed by GNB1 and GNG2 (PubMed:26206488). Activated by forskolin (PubMed:24700542). Is not activated by calmodulin. Inhibited by adenosine and ATP analogs (PubMed:26206488). Inhibited by calcium ions, already at micromolar concentrations (By similarity). Phosphorylation by RAF1 results in its activation (PubMed:15385642).</text>
</comment>
<comment type="subunit">
    <text evidence="4 9 14">Interacts with GNAS, GNB1 and GNG2 (PubMed:26206488). Part of a complex containing AKAP5, ADCY6, PDE4C and PKD2 (By similarity). Interacts with RAF1 (PubMed:15385642).</text>
</comment>
<comment type="subcellular location">
    <subcellularLocation>
        <location evidence="21 22">Cell membrane</location>
        <topology>Multi-pass membrane protein</topology>
    </subcellularLocation>
    <subcellularLocation>
        <location evidence="4">Cell projection</location>
        <location evidence="4">Cilium</location>
    </subcellularLocation>
</comment>
<comment type="alternative products">
    <event type="alternative splicing"/>
    <isoform>
        <id>O95622-1</id>
        <name>1</name>
        <sequence type="displayed"/>
    </isoform>
    <isoform>
        <id>O95622-2</id>
        <name>2</name>
        <sequence type="described" ref="VSP_042914 VSP_042915"/>
    </isoform>
</comment>
<comment type="tissue specificity">
    <text evidence="12 13">Detected in pancreas islets (at protein level). Expressed in the brain, with high expression in the corpus striatum (PubMed:26085604).</text>
</comment>
<comment type="domain">
    <text evidence="3">The protein contains two modules with six transmembrane helices each; both are required for catalytic activity. Isolated N-terminal or C-terminal guanylate cyclase domains have no catalytic activity, but when they are brought together, enzyme activity is restored. The active site is at the interface of the two domains. Both contribute substrate-binding residues, but the catalytic metal ions are bound exclusively via the N-terminal guanylate cyclase domain.</text>
</comment>
<comment type="PTM">
    <text evidence="9">Phosphorylated by RAF1.</text>
</comment>
<comment type="disease" evidence="15 16 17">
    <disease id="DI-06289">
        <name>Dyskinesia with orofacial involvement, autosomal recessive</name>
        <acronym>DSKOR</acronym>
        <description>An autosomal recessive disorder characterized by abnormal involuntary movements mainly affecting the limbs and causing walking difficulties, oro-facial dyskinesia, and speech delay. Some patients develop neuropsychiatric features. Cardiomyopathy has rarely been described and may be a manifestation of the disorder.</description>
        <dbReference type="MIM" id="619647"/>
    </disease>
    <text>The disease is caused by variants affecting the gene represented in this entry.</text>
</comment>
<comment type="disease" evidence="10 11 13">
    <disease id="DI-03514">
        <name>Dyskinesia with orofacial involvement, autosomal dominant</name>
        <acronym>DSKOD</acronym>
        <description>A disorder characterized by predominantly perioral and periorbital myokymia, and face, neck and upper limb dystonic/choreic movements. Initially paroxysmal and worsened by stress, the dyskinetic episodes become nearly constant by the end of the third decade of life, but in some individuals, they may diminish in frequency and severity at older ages.</description>
        <dbReference type="MIM" id="606703"/>
    </disease>
    <text>The disease is caused by variants affecting the gene represented in this entry.</text>
</comment>
<comment type="disease" evidence="18">
    <disease id="DI-06286">
        <name>Neurodevelopmental disorder with hyperkinetic movements and dyskinesia</name>
        <acronym>NEDHYD</acronym>
        <description>An autosomal recessive disorder characterized by severe global developmental delay, axial hypotonia, impaired intellectual development, poor overall growth, and abnormal involuntary hyperkinetic movements.</description>
        <dbReference type="MIM" id="619651"/>
    </disease>
    <text>The disease is caused by variants affecting the gene represented in this entry.</text>
</comment>
<comment type="similarity">
    <text evidence="7">Belongs to the adenylyl cyclase class-4/guanylyl cyclase family.</text>
</comment>
<evidence type="ECO:0000250" key="1">
    <source>
        <dbReference type="UniProtKB" id="O43306"/>
    </source>
</evidence>
<evidence type="ECO:0000250" key="2">
    <source>
        <dbReference type="UniProtKB" id="P26769"/>
    </source>
</evidence>
<evidence type="ECO:0000250" key="3">
    <source>
        <dbReference type="UniProtKB" id="P30803"/>
    </source>
</evidence>
<evidence type="ECO:0000250" key="4">
    <source>
        <dbReference type="UniProtKB" id="P84309"/>
    </source>
</evidence>
<evidence type="ECO:0000250" key="5">
    <source>
        <dbReference type="UniProtKB" id="Q03343"/>
    </source>
</evidence>
<evidence type="ECO:0000255" key="6"/>
<evidence type="ECO:0000255" key="7">
    <source>
        <dbReference type="PROSITE-ProRule" id="PRU00099"/>
    </source>
</evidence>
<evidence type="ECO:0000256" key="8">
    <source>
        <dbReference type="SAM" id="MobiDB-lite"/>
    </source>
</evidence>
<evidence type="ECO:0000269" key="9">
    <source>
    </source>
</evidence>
<evidence type="ECO:0000269" key="10">
    <source>
    </source>
</evidence>
<evidence type="ECO:0000269" key="11">
    <source>
    </source>
</evidence>
<evidence type="ECO:0000269" key="12">
    <source>
    </source>
</evidence>
<evidence type="ECO:0000269" key="13">
    <source>
    </source>
</evidence>
<evidence type="ECO:0000269" key="14">
    <source>
    </source>
</evidence>
<evidence type="ECO:0000269" key="15">
    <source>
    </source>
</evidence>
<evidence type="ECO:0000269" key="16">
    <source>
    </source>
</evidence>
<evidence type="ECO:0000269" key="17">
    <source>
    </source>
</evidence>
<evidence type="ECO:0000269" key="18">
    <source>
    </source>
</evidence>
<evidence type="ECO:0000303" key="19">
    <source>
    </source>
</evidence>
<evidence type="ECO:0000303" key="20">
    <source>
    </source>
</evidence>
<evidence type="ECO:0000305" key="21">
    <source>
    </source>
</evidence>
<evidence type="ECO:0000305" key="22">
    <source>
    </source>
</evidence>
<gene>
    <name type="primary">ADCY5</name>
</gene>
<organism>
    <name type="scientific">Homo sapiens</name>
    <name type="common">Human</name>
    <dbReference type="NCBI Taxonomy" id="9606"/>
    <lineage>
        <taxon>Eukaryota</taxon>
        <taxon>Metazoa</taxon>
        <taxon>Chordata</taxon>
        <taxon>Craniata</taxon>
        <taxon>Vertebrata</taxon>
        <taxon>Euteleostomi</taxon>
        <taxon>Mammalia</taxon>
        <taxon>Eutheria</taxon>
        <taxon>Euarchontoglires</taxon>
        <taxon>Primates</taxon>
        <taxon>Haplorrhini</taxon>
        <taxon>Catarrhini</taxon>
        <taxon>Hominidae</taxon>
        <taxon>Homo</taxon>
    </lineage>
</organism>
<sequence>MSGSKSVSPPGYAAQKTAAPAPRGGPEHRSAWGEADSRANGYPHAPGGSARGSTKKPGGAVTPQQQQRLASRWRSDDDDDPPLSGDDPLAGGFGFSFRSKSAWQERGGDDCGRGSRRQRRGAASGGSTRAPPAGGGGGSAAAAASAGGTEVRPRSVEVGLEERRGKGRAADELEAGAVEGGEGSGDGGSSADSGSGAGPGAVLSLGACCLALLQIFRSKKFPSDKLERLYQRYFFRLNQSSLTMLMAVLVLVCLVMLAFHAARPPLQLPYLAVLAAAVGVILIMAVLCNRAAFHQDHMGLACYALIAVVLAVQVVGLLLPQPRSASEGIWWTVFFIYTIYTLLPVRMRAAVLSGVLLSALHLAIALRTNAQDQFLLKQLVSNVLIFSCTNIVGVCTHYPAEVSQRQAFQETRECIQARLHSQRENQQQERLLLSVLPRHVAMEMKADINAKQEDMMFHKIYIQKHDNVSILFADIEGFTSLASQCTAQELVMTLNELFARFDKLAAENHCLRIKILGDCYYCVSGLPEARADHAHCCVEMGMDMIEAISLVREVTGVNVNMRVGIHSGRVHCGVLGLRKWQFDVWSNDVTLANHMEAGGKAGRIHITKATLNYLNGDYEVEPGCGGERNAYLKEHSIETFLILRCTQKRKEEKAMIAKMNRQRTNSIGHNPPHWGAERPFYNHLGGNQVSKEMKRMGFEDPKDKNAQESANPEDEVDEFLGRAIDARSIDRLRSEHVRKFLLTFREPDLEKKYSKQVDDRFGAYVACASLVFLFICFVQITIVPHSIFMLSFYLTCSLLLTLVVFVSVIYSCVKLFPSPLQTLSRKIVRSKMNSTLVGVFTITLVFLAAFVNMFTCNSRDLLGCLAQEHNISASQVNACHVAESAVNYSLGDEQGFCGSPWPNCNFPEYFTYSVLLSLLACSVFLQISCIGKLVLMLAIELIYVLIVEVPGVTLFDNADLLVTANAIDFFNNGTSQCPEHATKVALKVVTPIIISVFVLALYLHAQQVESTARLDFLWKLQATEEKEEMEELQAYNRRLLHNILPKDVAAHFLARERRNDELYYQSCECVAVMFASIANFSEFYVELEANNEGVECLRLLNEIIADFDEIISEDRFRQLEKIKTIGSTYMAASGLNDSTYDKVGKTHIKALADFAMKLMDQMKYINEHSFNNFQMKIGLNIGPVVAGVIGARKPQYDIWGNTVNVASRMDSTGVPDRIQVTTDMYQVLAANTYQLECRGVVKVKGKGEMMTYFLNGGPPLS</sequence>
<feature type="chain" id="PRO_0000195694" description="Adenylate cyclase type 5">
    <location>
        <begin position="1"/>
        <end position="1261"/>
    </location>
</feature>
<feature type="topological domain" description="Cytoplasmic" evidence="6">
    <location>
        <begin position="1"/>
        <end position="195"/>
    </location>
</feature>
<feature type="transmembrane region" description="Helical" evidence="6">
    <location>
        <begin position="196"/>
        <end position="216"/>
    </location>
</feature>
<feature type="transmembrane region" description="Helical" evidence="6">
    <location>
        <begin position="242"/>
        <end position="262"/>
    </location>
</feature>
<feature type="transmembrane region" description="Helical" evidence="6">
    <location>
        <begin position="268"/>
        <end position="288"/>
    </location>
</feature>
<feature type="transmembrane region" description="Helical" evidence="6">
    <location>
        <begin position="299"/>
        <end position="319"/>
    </location>
</feature>
<feature type="transmembrane region" description="Helical" evidence="6">
    <location>
        <begin position="325"/>
        <end position="345"/>
    </location>
</feature>
<feature type="transmembrane region" description="Helical" evidence="6">
    <location>
        <begin position="374"/>
        <end position="394"/>
    </location>
</feature>
<feature type="topological domain" description="Cytoplasmic" evidence="6">
    <location>
        <begin position="395"/>
        <end position="769"/>
    </location>
</feature>
<feature type="transmembrane region" description="Helical" evidence="6">
    <location>
        <begin position="770"/>
        <end position="790"/>
    </location>
</feature>
<feature type="transmembrane region" description="Helical" evidence="6">
    <location>
        <begin position="792"/>
        <end position="812"/>
    </location>
</feature>
<feature type="transmembrane region" description="Helical" evidence="6">
    <location>
        <begin position="836"/>
        <end position="856"/>
    </location>
</feature>
<feature type="topological domain" description="Extracellular" evidence="6">
    <location>
        <begin position="857"/>
        <end position="909"/>
    </location>
</feature>
<feature type="transmembrane region" description="Helical" evidence="6">
    <location>
        <begin position="910"/>
        <end position="930"/>
    </location>
</feature>
<feature type="transmembrane region" description="Helical" evidence="6">
    <location>
        <begin position="935"/>
        <end position="955"/>
    </location>
</feature>
<feature type="transmembrane region" description="Helical" evidence="6">
    <location>
        <begin position="984"/>
        <end position="1004"/>
    </location>
</feature>
<feature type="topological domain" description="Cytoplasmic" evidence="6">
    <location>
        <begin position="1005"/>
        <end position="1261"/>
    </location>
</feature>
<feature type="domain" description="Guanylate cyclase 1" evidence="7">
    <location>
        <begin position="469"/>
        <end position="596"/>
    </location>
</feature>
<feature type="domain" description="Guanylate cyclase 2" evidence="7">
    <location>
        <begin position="1071"/>
        <end position="1210"/>
    </location>
</feature>
<feature type="region of interest" description="Disordered" evidence="8">
    <location>
        <begin position="1"/>
        <end position="195"/>
    </location>
</feature>
<feature type="compositionally biased region" description="Basic and acidic residues" evidence="8">
    <location>
        <begin position="25"/>
        <end position="37"/>
    </location>
</feature>
<feature type="compositionally biased region" description="Low complexity" evidence="8">
    <location>
        <begin position="121"/>
        <end position="132"/>
    </location>
</feature>
<feature type="compositionally biased region" description="Basic and acidic residues" evidence="8">
    <location>
        <begin position="151"/>
        <end position="171"/>
    </location>
</feature>
<feature type="compositionally biased region" description="Gly residues" evidence="8">
    <location>
        <begin position="178"/>
        <end position="188"/>
    </location>
</feature>
<feature type="binding site" evidence="3">
    <location>
        <begin position="474"/>
        <end position="479"/>
    </location>
    <ligand>
        <name>ATP</name>
        <dbReference type="ChEBI" id="CHEBI:30616"/>
    </ligand>
</feature>
<feature type="binding site" evidence="7">
    <location>
        <position position="474"/>
    </location>
    <ligand>
        <name>Mg(2+)</name>
        <dbReference type="ChEBI" id="CHEBI:18420"/>
        <label>1</label>
        <note>catalytic</note>
    </ligand>
</feature>
<feature type="binding site" evidence="7">
    <location>
        <position position="474"/>
    </location>
    <ligand>
        <name>Mg(2+)</name>
        <dbReference type="ChEBI" id="CHEBI:18420"/>
        <label>2</label>
        <note>catalytic</note>
    </ligand>
</feature>
<feature type="binding site" evidence="7">
    <location>
        <position position="475"/>
    </location>
    <ligand>
        <name>Mg(2+)</name>
        <dbReference type="ChEBI" id="CHEBI:18420"/>
        <label>2</label>
        <note>catalytic</note>
    </ligand>
</feature>
<feature type="binding site" evidence="3">
    <location>
        <begin position="516"/>
        <end position="518"/>
    </location>
    <ligand>
        <name>ATP</name>
        <dbReference type="ChEBI" id="CHEBI:30616"/>
    </ligand>
</feature>
<feature type="binding site" evidence="7">
    <location>
        <position position="518"/>
    </location>
    <ligand>
        <name>Mg(2+)</name>
        <dbReference type="ChEBI" id="CHEBI:18420"/>
        <label>1</label>
        <note>catalytic</note>
    </ligand>
</feature>
<feature type="binding site" evidence="7">
    <location>
        <position position="518"/>
    </location>
    <ligand>
        <name>Mg(2+)</name>
        <dbReference type="ChEBI" id="CHEBI:18420"/>
        <label>2</label>
        <note>catalytic</note>
    </ligand>
</feature>
<feature type="binding site" evidence="3">
    <location>
        <position position="562"/>
    </location>
    <ligand>
        <name>ATP</name>
        <dbReference type="ChEBI" id="CHEBI:30616"/>
    </ligand>
</feature>
<feature type="binding site" evidence="2">
    <location>
        <position position="1123"/>
    </location>
    <ligand>
        <name>ATP</name>
        <dbReference type="ChEBI" id="CHEBI:30616"/>
    </ligand>
</feature>
<feature type="binding site" evidence="2">
    <location>
        <begin position="1197"/>
        <end position="1199"/>
    </location>
    <ligand>
        <name>ATP</name>
        <dbReference type="ChEBI" id="CHEBI:30616"/>
    </ligand>
</feature>
<feature type="binding site" evidence="2">
    <location>
        <begin position="1204"/>
        <end position="1208"/>
    </location>
    <ligand>
        <name>ATP</name>
        <dbReference type="ChEBI" id="CHEBI:30616"/>
    </ligand>
</feature>
<feature type="binding site" evidence="2">
    <location>
        <position position="1244"/>
    </location>
    <ligand>
        <name>ATP</name>
        <dbReference type="ChEBI" id="CHEBI:30616"/>
    </ligand>
</feature>
<feature type="modified residue" description="Omega-N-methylarginine" evidence="4">
    <location>
        <position position="23"/>
    </location>
</feature>
<feature type="modified residue" description="Phosphoserine" evidence="4">
    <location>
        <position position="96"/>
    </location>
</feature>
<feature type="modified residue" description="Phosphoserine" evidence="4">
    <location>
        <position position="155"/>
    </location>
</feature>
<feature type="modified residue" description="Phosphoserine" evidence="1">
    <location>
        <position position="666"/>
    </location>
</feature>
<feature type="modified residue" description="Phosphoserine" evidence="5">
    <location>
        <position position="754"/>
    </location>
</feature>
<feature type="modified residue" description="Phosphothreonine" evidence="5">
    <location>
        <position position="1011"/>
    </location>
</feature>
<feature type="glycosylation site" description="N-linked (GlcNAc...) asparagine" evidence="6">
    <location>
        <position position="870"/>
    </location>
</feature>
<feature type="glycosylation site" description="N-linked (GlcNAc...) asparagine" evidence="6">
    <location>
        <position position="887"/>
    </location>
</feature>
<feature type="splice variant" id="VSP_042914" description="In isoform 2." evidence="19">
    <original>MSGSKSVSPPGYAAQKTAAPAPRGGPEH</original>
    <variation>MKSQKEGCCSRGDLSIQTGPGGEWAPRR</variation>
    <location>
        <begin position="1"/>
        <end position="28"/>
    </location>
</feature>
<feature type="splice variant" id="VSP_042915" description="In isoform 2." evidence="19">
    <location>
        <begin position="29"/>
        <end position="378"/>
    </location>
</feature>
<feature type="sequence variant" id="VAR_086538" description="In dbSNP:rs143905423." evidence="13">
    <original>P</original>
    <variation>L</variation>
    <location>
        <position position="10"/>
    </location>
</feature>
<feature type="sequence variant" id="VAR_073778" description="In DSKOD; increases cAMP production upon activation of ADRB1; dbSNP:rs864309483." evidence="11 13">
    <original>R</original>
    <variation>W</variation>
    <location>
        <position position="418"/>
    </location>
</feature>
<feature type="sequence variant" id="VAR_086539" description="In DSKOR; dbSNP:rs2108390731." evidence="16">
    <original>D</original>
    <variation>N</variation>
    <location>
        <position position="588"/>
    </location>
</feature>
<feature type="sequence variant" id="VAR_086540" evidence="13">
    <original>A</original>
    <variation>V</variation>
    <location>
        <position position="706"/>
    </location>
</feature>
<feature type="sequence variant" id="VAR_068821" description="In DSKOD; increases cAMP production upon activation of ADRB1; dbSNP:rs796065306." evidence="10 11">
    <original>A</original>
    <variation>T</variation>
    <location>
        <position position="726"/>
    </location>
</feature>
<feature type="sequence variant" id="VAR_086541" description="In DSKOR; dbSNP:rs1365372289." evidence="15">
    <original>R</original>
    <variation>C</variation>
    <location>
        <position position="1013"/>
    </location>
</feature>
<feature type="sequence variant" id="VAR_086542" description="In DSKOR; dbSNP:rs2108148749." evidence="17">
    <original>R</original>
    <variation>W</variation>
    <location>
        <position position="1238"/>
    </location>
</feature>
<reference key="1">
    <citation type="journal article" date="2004" name="Nat. Genet.">
        <title>Complete sequencing and characterization of 21,243 full-length human cDNAs.</title>
        <authorList>
            <person name="Ota T."/>
            <person name="Suzuki Y."/>
            <person name="Nishikawa T."/>
            <person name="Otsuki T."/>
            <person name="Sugiyama T."/>
            <person name="Irie R."/>
            <person name="Wakamatsu A."/>
            <person name="Hayashi K."/>
            <person name="Sato H."/>
            <person name="Nagai K."/>
            <person name="Kimura K."/>
            <person name="Makita H."/>
            <person name="Sekine M."/>
            <person name="Obayashi M."/>
            <person name="Nishi T."/>
            <person name="Shibahara T."/>
            <person name="Tanaka T."/>
            <person name="Ishii S."/>
            <person name="Yamamoto J."/>
            <person name="Saito K."/>
            <person name="Kawai Y."/>
            <person name="Isono Y."/>
            <person name="Nakamura Y."/>
            <person name="Nagahari K."/>
            <person name="Murakami K."/>
            <person name="Yasuda T."/>
            <person name="Iwayanagi T."/>
            <person name="Wagatsuma M."/>
            <person name="Shiratori A."/>
            <person name="Sudo H."/>
            <person name="Hosoiri T."/>
            <person name="Kaku Y."/>
            <person name="Kodaira H."/>
            <person name="Kondo H."/>
            <person name="Sugawara M."/>
            <person name="Takahashi M."/>
            <person name="Kanda K."/>
            <person name="Yokoi T."/>
            <person name="Furuya T."/>
            <person name="Kikkawa E."/>
            <person name="Omura Y."/>
            <person name="Abe K."/>
            <person name="Kamihara K."/>
            <person name="Katsuta N."/>
            <person name="Sato K."/>
            <person name="Tanikawa M."/>
            <person name="Yamazaki M."/>
            <person name="Ninomiya K."/>
            <person name="Ishibashi T."/>
            <person name="Yamashita H."/>
            <person name="Murakawa K."/>
            <person name="Fujimori K."/>
            <person name="Tanai H."/>
            <person name="Kimata M."/>
            <person name="Watanabe M."/>
            <person name="Hiraoka S."/>
            <person name="Chiba Y."/>
            <person name="Ishida S."/>
            <person name="Ono Y."/>
            <person name="Takiguchi S."/>
            <person name="Watanabe S."/>
            <person name="Yosida M."/>
            <person name="Hotuta T."/>
            <person name="Kusano J."/>
            <person name="Kanehori K."/>
            <person name="Takahashi-Fujii A."/>
            <person name="Hara H."/>
            <person name="Tanase T.-O."/>
            <person name="Nomura Y."/>
            <person name="Togiya S."/>
            <person name="Komai F."/>
            <person name="Hara R."/>
            <person name="Takeuchi K."/>
            <person name="Arita M."/>
            <person name="Imose N."/>
            <person name="Musashino K."/>
            <person name="Yuuki H."/>
            <person name="Oshima A."/>
            <person name="Sasaki N."/>
            <person name="Aotsuka S."/>
            <person name="Yoshikawa Y."/>
            <person name="Matsunawa H."/>
            <person name="Ichihara T."/>
            <person name="Shiohata N."/>
            <person name="Sano S."/>
            <person name="Moriya S."/>
            <person name="Momiyama H."/>
            <person name="Satoh N."/>
            <person name="Takami S."/>
            <person name="Terashima Y."/>
            <person name="Suzuki O."/>
            <person name="Nakagawa S."/>
            <person name="Senoh A."/>
            <person name="Mizoguchi H."/>
            <person name="Goto Y."/>
            <person name="Shimizu F."/>
            <person name="Wakebe H."/>
            <person name="Hishigaki H."/>
            <person name="Watanabe T."/>
            <person name="Sugiyama A."/>
            <person name="Takemoto M."/>
            <person name="Kawakami B."/>
            <person name="Yamazaki M."/>
            <person name="Watanabe K."/>
            <person name="Kumagai A."/>
            <person name="Itakura S."/>
            <person name="Fukuzumi Y."/>
            <person name="Fujimori Y."/>
            <person name="Komiyama M."/>
            <person name="Tashiro H."/>
            <person name="Tanigami A."/>
            <person name="Fujiwara T."/>
            <person name="Ono T."/>
            <person name="Yamada K."/>
            <person name="Fujii Y."/>
            <person name="Ozaki K."/>
            <person name="Hirao M."/>
            <person name="Ohmori Y."/>
            <person name="Kawabata A."/>
            <person name="Hikiji T."/>
            <person name="Kobatake N."/>
            <person name="Inagaki H."/>
            <person name="Ikema Y."/>
            <person name="Okamoto S."/>
            <person name="Okitani R."/>
            <person name="Kawakami T."/>
            <person name="Noguchi S."/>
            <person name="Itoh T."/>
            <person name="Shigeta K."/>
            <person name="Senba T."/>
            <person name="Matsumura K."/>
            <person name="Nakajima Y."/>
            <person name="Mizuno T."/>
            <person name="Morinaga M."/>
            <person name="Sasaki M."/>
            <person name="Togashi T."/>
            <person name="Oyama M."/>
            <person name="Hata H."/>
            <person name="Watanabe M."/>
            <person name="Komatsu T."/>
            <person name="Mizushima-Sugano J."/>
            <person name="Satoh T."/>
            <person name="Shirai Y."/>
            <person name="Takahashi Y."/>
            <person name="Nakagawa K."/>
            <person name="Okumura K."/>
            <person name="Nagase T."/>
            <person name="Nomura N."/>
            <person name="Kikuchi H."/>
            <person name="Masuho Y."/>
            <person name="Yamashita R."/>
            <person name="Nakai K."/>
            <person name="Yada T."/>
            <person name="Nakamura Y."/>
            <person name="Ohara O."/>
            <person name="Isogai T."/>
            <person name="Sugano S."/>
        </authorList>
    </citation>
    <scope>NUCLEOTIDE SEQUENCE [LARGE SCALE MRNA] (ISOFORM 2)</scope>
    <source>
        <tissue>Testis</tissue>
    </source>
</reference>
<reference key="2">
    <citation type="journal article" date="2006" name="Nature">
        <title>The DNA sequence, annotation and analysis of human chromosome 3.</title>
        <authorList>
            <person name="Muzny D.M."/>
            <person name="Scherer S.E."/>
            <person name="Kaul R."/>
            <person name="Wang J."/>
            <person name="Yu J."/>
            <person name="Sudbrak R."/>
            <person name="Buhay C.J."/>
            <person name="Chen R."/>
            <person name="Cree A."/>
            <person name="Ding Y."/>
            <person name="Dugan-Rocha S."/>
            <person name="Gill R."/>
            <person name="Gunaratne P."/>
            <person name="Harris R.A."/>
            <person name="Hawes A.C."/>
            <person name="Hernandez J."/>
            <person name="Hodgson A.V."/>
            <person name="Hume J."/>
            <person name="Jackson A."/>
            <person name="Khan Z.M."/>
            <person name="Kovar-Smith C."/>
            <person name="Lewis L.R."/>
            <person name="Lozado R.J."/>
            <person name="Metzker M.L."/>
            <person name="Milosavljevic A."/>
            <person name="Miner G.R."/>
            <person name="Morgan M.B."/>
            <person name="Nazareth L.V."/>
            <person name="Scott G."/>
            <person name="Sodergren E."/>
            <person name="Song X.-Z."/>
            <person name="Steffen D."/>
            <person name="Wei S."/>
            <person name="Wheeler D.A."/>
            <person name="Wright M.W."/>
            <person name="Worley K.C."/>
            <person name="Yuan Y."/>
            <person name="Zhang Z."/>
            <person name="Adams C.Q."/>
            <person name="Ansari-Lari M.A."/>
            <person name="Ayele M."/>
            <person name="Brown M.J."/>
            <person name="Chen G."/>
            <person name="Chen Z."/>
            <person name="Clendenning J."/>
            <person name="Clerc-Blankenburg K.P."/>
            <person name="Chen R."/>
            <person name="Chen Z."/>
            <person name="Davis C."/>
            <person name="Delgado O."/>
            <person name="Dinh H.H."/>
            <person name="Dong W."/>
            <person name="Draper H."/>
            <person name="Ernst S."/>
            <person name="Fu G."/>
            <person name="Gonzalez-Garay M.L."/>
            <person name="Garcia D.K."/>
            <person name="Gillett W."/>
            <person name="Gu J."/>
            <person name="Hao B."/>
            <person name="Haugen E."/>
            <person name="Havlak P."/>
            <person name="He X."/>
            <person name="Hennig S."/>
            <person name="Hu S."/>
            <person name="Huang W."/>
            <person name="Jackson L.R."/>
            <person name="Jacob L.S."/>
            <person name="Kelly S.H."/>
            <person name="Kube M."/>
            <person name="Levy R."/>
            <person name="Li Z."/>
            <person name="Liu B."/>
            <person name="Liu J."/>
            <person name="Liu W."/>
            <person name="Lu J."/>
            <person name="Maheshwari M."/>
            <person name="Nguyen B.-V."/>
            <person name="Okwuonu G.O."/>
            <person name="Palmeiri A."/>
            <person name="Pasternak S."/>
            <person name="Perez L.M."/>
            <person name="Phelps K.A."/>
            <person name="Plopper F.J."/>
            <person name="Qiang B."/>
            <person name="Raymond C."/>
            <person name="Rodriguez R."/>
            <person name="Saenphimmachak C."/>
            <person name="Santibanez J."/>
            <person name="Shen H."/>
            <person name="Shen Y."/>
            <person name="Subramanian S."/>
            <person name="Tabor P.E."/>
            <person name="Verduzco D."/>
            <person name="Waldron L."/>
            <person name="Wang J."/>
            <person name="Wang J."/>
            <person name="Wang Q."/>
            <person name="Williams G.A."/>
            <person name="Wong G.K.-S."/>
            <person name="Yao Z."/>
            <person name="Zhang J."/>
            <person name="Zhang X."/>
            <person name="Zhao G."/>
            <person name="Zhou J."/>
            <person name="Zhou Y."/>
            <person name="Nelson D."/>
            <person name="Lehrach H."/>
            <person name="Reinhardt R."/>
            <person name="Naylor S.L."/>
            <person name="Yang H."/>
            <person name="Olson M."/>
            <person name="Weinstock G."/>
            <person name="Gibbs R.A."/>
        </authorList>
    </citation>
    <scope>NUCLEOTIDE SEQUENCE [LARGE SCALE GENOMIC DNA]</scope>
</reference>
<reference key="3">
    <citation type="journal article" date="2002" name="J. Recept. Signal Transduct.">
        <title>Characterization of the human adenylyl cyclase gene family: cDNA, gene structure, and tissue distribution of the nine isoforms.</title>
        <authorList>
            <person name="Ludwig M.G."/>
            <person name="Seuwen K."/>
        </authorList>
    </citation>
    <scope>NUCLEOTIDE SEQUENCE [MRNA] OF 368-1261 (ISOFORM 1)</scope>
    <source>
        <tissue>Heart</tissue>
    </source>
</reference>
<reference key="4">
    <citation type="journal article" date="1999" name="Clin. Chim. Acta">
        <title>Cloning and sequence of partial cDNAs encoding the human type V and VI adenylyl cyclases and subsequent RNA-quantification in various tissues.</title>
        <authorList>
            <person name="Raimundo S."/>
            <person name="Giray J."/>
            <person name="Volff J.-N."/>
            <person name="Schwab M."/>
            <person name="Altenbuchner J."/>
            <person name="Ratge D."/>
            <person name="Wisser H."/>
        </authorList>
    </citation>
    <scope>NUCLEOTIDE SEQUENCE [MRNA] OF 560-664 (ISOFORM 1)</scope>
    <source>
        <tissue>Heart muscle</tissue>
    </source>
</reference>
<reference key="5">
    <citation type="journal article" date="2004" name="Mol. Pharmacol.">
        <title>Raf kinase activation of adenylyl cyclases: isoform-selective regulation.</title>
        <authorList>
            <person name="Ding Q."/>
            <person name="Gros R."/>
            <person name="Gray I.D."/>
            <person name="Taussig R."/>
            <person name="Ferguson S.S."/>
            <person name="Feldman R.D."/>
        </authorList>
    </citation>
    <scope>FUNCTION</scope>
    <scope>CATALYTIC ACTIVITY</scope>
    <scope>COFACTOR</scope>
    <scope>SUBCELLULAR LOCATION</scope>
    <scope>PHOSPHORYLATION BY RAF1</scope>
    <scope>INTERACTION WITH RAF1</scope>
    <scope>ACTIVITY REGULATION</scope>
</reference>
<reference key="6">
    <citation type="journal article" date="2014" name="Diabetes">
        <title>ADCY5 couples glucose to insulin secretion in human islets.</title>
        <authorList>
            <person name="Hodson D.J."/>
            <person name="Mitchell R.K."/>
            <person name="Marselli L."/>
            <person name="Pullen T.J."/>
            <person name="Gimeno Brias S."/>
            <person name="Semplici F."/>
            <person name="Everett K.L."/>
            <person name="Cooper D.M."/>
            <person name="Bugliani M."/>
            <person name="Marchetti P."/>
            <person name="Lavallard V."/>
            <person name="Bosco D."/>
            <person name="Piemonti L."/>
            <person name="Johnson P.R."/>
            <person name="Hughes S.J."/>
            <person name="Li D."/>
            <person name="Li W.H."/>
            <person name="Shapiro A.M."/>
            <person name="Rutter G.A."/>
        </authorList>
    </citation>
    <scope>FUNCTION</scope>
    <scope>TISSUE SPECIFICITY</scope>
</reference>
<reference key="7">
    <citation type="journal article" date="2015" name="Mol. Pharmacol.">
        <title>Adenylyl cyclase 5 regulation by Gbetagamma involves isoform specific use of multiple interaction sites.</title>
        <authorList>
            <person name="Brand C.S."/>
            <person name="Sadana R."/>
            <person name="Malik S."/>
            <person name="Smrcka A.V."/>
            <person name="Dessauer C.W."/>
        </authorList>
    </citation>
    <scope>INTERACTION WITH GNAS; GNB1 AND GNG2</scope>
    <scope>FUNCTION</scope>
    <scope>CATALYTIC ACTIVITY</scope>
    <scope>ACTIVITY REGULATION</scope>
    <scope>SUBCELLULAR LOCATION</scope>
</reference>
<reference key="8">
    <citation type="journal article" date="2012" name="Arch. Neurol.">
        <title>Autosomal dominant familial dyskinesia and facial myokymia: single exome sequencing identifies a mutation in adenylyl cyclase 5.</title>
        <authorList>
            <person name="Chen Y.Z."/>
            <person name="Matsushita M.M."/>
            <person name="Robertson P."/>
            <person name="Rieder M."/>
            <person name="Girirajan S."/>
            <person name="Antonacci F."/>
            <person name="Lipe H."/>
            <person name="Eichler E.E."/>
            <person name="Nickerson D.A."/>
            <person name="Bird T.D."/>
            <person name="Raskind W.H."/>
        </authorList>
    </citation>
    <scope>VARIANT DSKOD THR-726</scope>
</reference>
<reference key="9">
    <citation type="journal article" date="2014" name="Ann. Neurol.">
        <title>Gain-of-function ADCY5 mutations in familial dyskinesia with facial myokymia.</title>
        <authorList>
            <person name="Chen Y.Z."/>
            <person name="Friedman J.R."/>
            <person name="Chen D.H."/>
            <person name="Chan G.C."/>
            <person name="Bloss C.S."/>
            <person name="Hisama F.M."/>
            <person name="Topol S.E."/>
            <person name="Carson A.R."/>
            <person name="Pham P.H."/>
            <person name="Bonkowski E.S."/>
            <person name="Scott E.R."/>
            <person name="Lee J.K."/>
            <person name="Zhang G."/>
            <person name="Oliveira G."/>
            <person name="Xu J."/>
            <person name="Scott-Van Zeeland A.A."/>
            <person name="Chen Q."/>
            <person name="Levy S."/>
            <person name="Topol E.J."/>
            <person name="Storm D."/>
            <person name="Swanson P.D."/>
            <person name="Bird T.D."/>
            <person name="Schork N.J."/>
            <person name="Raskind W.H."/>
            <person name="Torkamani A."/>
        </authorList>
    </citation>
    <scope>VARIANT DSKOD TRP-418</scope>
    <scope>CHARACTERIZATION OF VARIANTS DSKOD TRP-418 AND THR-726</scope>
    <scope>FUNCTION</scope>
    <scope>CATALYTIC ACTIVITY</scope>
    <scope>ACTIVITY REGULATION</scope>
</reference>
<reference key="10">
    <citation type="journal article" date="2015" name="Neurology">
        <title>ADCY5 mutations are another cause of benign hereditary chorea.</title>
        <authorList>
            <person name="Mencacci N.E."/>
            <person name="Erro R."/>
            <person name="Wiethoff S."/>
            <person name="Hersheson J."/>
            <person name="Ryten M."/>
            <person name="Balint B."/>
            <person name="Ganos C."/>
            <person name="Stamelou M."/>
            <person name="Quinn N."/>
            <person name="Houlden H."/>
            <person name="Wood N.W."/>
            <person name="Bhatia K.P."/>
        </authorList>
    </citation>
    <scope>VARIANTS LEU-10 AND VAL-706</scope>
    <scope>VARIANT DSKOD TRP-418</scope>
    <scope>TISSUE SPECIFICITY</scope>
</reference>
<reference key="11">
    <citation type="journal article" date="2017" name="Neurol. Genet.">
        <title>Autosomal recessive inheritance of ADCY5-related generalized dystonia and myoclonus.</title>
        <authorList>
            <person name="Barrett M.J."/>
            <person name="Williams E.S."/>
            <person name="Chambers C."/>
            <person name="Dhamija R."/>
        </authorList>
    </citation>
    <scope>VARIANT DSKOR CYS-1013</scope>
    <scope>INVOLVEMENT IN DSKOR</scope>
</reference>
<reference key="12">
    <citation type="journal article" date="2019" name="Parkinsonism Relat. Disord.">
        <title>Autosomal recessive ADCY5-Related dystonia and myoclonus: Expanding the genetic spectrum of ADCY5-Related movement disorders.</title>
        <authorList>
            <person name="Bohlega S.A."/>
            <person name="Abou-Al-Shaar H."/>
            <person name="Al-Dakheel A."/>
            <person name="Alajlan H."/>
            <person name="Bohlega B.S."/>
            <person name="Meyer B.F."/>
            <person name="Monies D."/>
            <person name="Cupler E.J."/>
            <person name="Al-Saif A.M."/>
        </authorList>
    </citation>
    <scope>VARIANT DSKOR ASN-588</scope>
    <scope>INVOLVEMENT IN DSKOR</scope>
</reference>
<reference key="13">
    <citation type="journal article" date="2021" name="Neurol. Sci.">
        <title>Homozygous ADCY5 mutation causes early-onset movement disorder with severe intellectual disability.</title>
        <authorList>
            <person name="Okamoto N."/>
            <person name="Miya F."/>
            <person name="Kitai Y."/>
            <person name="Tsunoda T."/>
            <person name="Kato M."/>
            <person name="Saitoh S."/>
            <person name="Kanemura Y."/>
            <person name="Kosaki K."/>
        </authorList>
    </citation>
    <scope>VARIANT DSKOR TRP-1238</scope>
</reference>
<reference key="14">
    <citation type="journal article" date="2021" name="Mov. Disord. Clin. Pract.">
        <title>A Novel Homozygous ADCY5 Variant is Associated with a Neurodevelopmental Disorder and Movement Abnormalities.</title>
        <authorList>
            <person name="Kaiyrzhanov R."/>
            <person name="Zaki M.S."/>
            <person name="Maroofian R."/>
            <person name="Dominik N."/>
            <person name="Rad A."/>
            <person name="Vona B."/>
            <person name="Houlden H."/>
        </authorList>
    </citation>
    <scope>INVOLVEMENT IN NEDHYD</scope>
</reference>
<keyword id="KW-0002">3D-structure</keyword>
<keyword id="KW-0025">Alternative splicing</keyword>
<keyword id="KW-0067">ATP-binding</keyword>
<keyword id="KW-0115">cAMP biosynthesis</keyword>
<keyword id="KW-1003">Cell membrane</keyword>
<keyword id="KW-0966">Cell projection</keyword>
<keyword id="KW-0969">Cilium</keyword>
<keyword id="KW-0225">Disease variant</keyword>
<keyword id="KW-0325">Glycoprotein</keyword>
<keyword id="KW-0991">Intellectual disability</keyword>
<keyword id="KW-0456">Lyase</keyword>
<keyword id="KW-0460">Magnesium</keyword>
<keyword id="KW-0472">Membrane</keyword>
<keyword id="KW-0479">Metal-binding</keyword>
<keyword id="KW-0488">Methylation</keyword>
<keyword id="KW-0547">Nucleotide-binding</keyword>
<keyword id="KW-0597">Phosphoprotein</keyword>
<keyword id="KW-1267">Proteomics identification</keyword>
<keyword id="KW-1185">Reference proteome</keyword>
<keyword id="KW-0677">Repeat</keyword>
<keyword id="KW-0812">Transmembrane</keyword>
<keyword id="KW-1133">Transmembrane helix</keyword>
<dbReference type="EC" id="4.6.1.1" evidence="9 11 14"/>
<dbReference type="EMBL" id="AK303070">
    <property type="protein sequence ID" value="BAH13892.1"/>
    <property type="molecule type" value="mRNA"/>
</dbReference>
<dbReference type="EMBL" id="AC025571">
    <property type="status" value="NOT_ANNOTATED_CDS"/>
    <property type="molecule type" value="Genomic_DNA"/>
</dbReference>
<dbReference type="EMBL" id="AC112503">
    <property type="status" value="NOT_ANNOTATED_CDS"/>
    <property type="molecule type" value="Genomic_DNA"/>
</dbReference>
<dbReference type="EMBL" id="AF497517">
    <property type="protein sequence ID" value="AAM94374.1"/>
    <property type="molecule type" value="mRNA"/>
</dbReference>
<dbReference type="EMBL" id="U65473">
    <property type="protein sequence ID" value="AAD00121.1"/>
    <property type="molecule type" value="mRNA"/>
</dbReference>
<dbReference type="EMBL" id="BK000371">
    <property type="protein sequence ID" value="DAA00057.1"/>
    <property type="molecule type" value="mRNA"/>
</dbReference>
<dbReference type="CCDS" id="CCDS3022.1">
    <molecule id="O95622-1"/>
</dbReference>
<dbReference type="CCDS" id="CCDS56274.1">
    <molecule id="O95622-2"/>
</dbReference>
<dbReference type="RefSeq" id="NP_001186571.1">
    <molecule id="O95622-2"/>
    <property type="nucleotide sequence ID" value="NM_001199642.1"/>
</dbReference>
<dbReference type="RefSeq" id="NP_899200.1">
    <molecule id="O95622-1"/>
    <property type="nucleotide sequence ID" value="NM_183357.3"/>
</dbReference>
<dbReference type="PDB" id="8SL3">
    <property type="method" value="EM"/>
    <property type="resolution" value="7.00 A"/>
    <property type="chains" value="A=1-1261"/>
</dbReference>
<dbReference type="PDB" id="8SL4">
    <property type="method" value="EM"/>
    <property type="resolution" value="7.00 A"/>
    <property type="chains" value="A/B=1-1261"/>
</dbReference>
<dbReference type="PDBsum" id="8SL3"/>
<dbReference type="PDBsum" id="8SL4"/>
<dbReference type="EMDB" id="EMD-40572"/>
<dbReference type="EMDB" id="EMD-40573"/>
<dbReference type="SMR" id="O95622"/>
<dbReference type="BioGRID" id="106624">
    <property type="interactions" value="17"/>
</dbReference>
<dbReference type="FunCoup" id="O95622">
    <property type="interactions" value="1519"/>
</dbReference>
<dbReference type="IntAct" id="O95622">
    <property type="interactions" value="2"/>
</dbReference>
<dbReference type="STRING" id="9606.ENSP00000419361"/>
<dbReference type="BindingDB" id="O95622"/>
<dbReference type="ChEMBL" id="CHEMBL3189"/>
<dbReference type="DrugBank" id="DB06843">
    <property type="generic name" value="2',5'-DIDEOXY-ADENOSINE 3'-MONOPHOSPHATE"/>
</dbReference>
<dbReference type="DrugBank" id="DB09121">
    <property type="generic name" value="Aurothioglucose"/>
</dbReference>
<dbReference type="DrugBank" id="DB02587">
    <property type="generic name" value="Colforsin"/>
</dbReference>
<dbReference type="GuidetoPHARMACOLOGY" id="1282"/>
<dbReference type="GlyCosmos" id="O95622">
    <property type="glycosylation" value="2 sites, No reported glycans"/>
</dbReference>
<dbReference type="GlyGen" id="O95622">
    <property type="glycosylation" value="3 sites"/>
</dbReference>
<dbReference type="iPTMnet" id="O95622"/>
<dbReference type="PhosphoSitePlus" id="O95622"/>
<dbReference type="SwissPalm" id="O95622"/>
<dbReference type="BioMuta" id="ADCY5"/>
<dbReference type="jPOST" id="O95622"/>
<dbReference type="MassIVE" id="O95622"/>
<dbReference type="PaxDb" id="9606-ENSP00000419361"/>
<dbReference type="PeptideAtlas" id="O95622"/>
<dbReference type="ProteomicsDB" id="50954">
    <molecule id="O95622-1"/>
</dbReference>
<dbReference type="ProteomicsDB" id="50955">
    <molecule id="O95622-2"/>
</dbReference>
<dbReference type="Antibodypedia" id="2807">
    <property type="antibodies" value="159 antibodies from 28 providers"/>
</dbReference>
<dbReference type="DNASU" id="111"/>
<dbReference type="Ensembl" id="ENST00000309879.9">
    <molecule id="O95622-2"/>
    <property type="protein sequence ID" value="ENSP00000308685.5"/>
    <property type="gene ID" value="ENSG00000173175.16"/>
</dbReference>
<dbReference type="Ensembl" id="ENST00000462833.6">
    <molecule id="O95622-1"/>
    <property type="protein sequence ID" value="ENSP00000419361.1"/>
    <property type="gene ID" value="ENSG00000173175.16"/>
</dbReference>
<dbReference type="GeneID" id="111"/>
<dbReference type="KEGG" id="hsa:111"/>
<dbReference type="MANE-Select" id="ENST00000462833.6">
    <property type="protein sequence ID" value="ENSP00000419361.1"/>
    <property type="RefSeq nucleotide sequence ID" value="NM_183357.3"/>
    <property type="RefSeq protein sequence ID" value="NP_899200.1"/>
</dbReference>
<dbReference type="UCSC" id="uc003egh.3">
    <molecule id="O95622-1"/>
    <property type="organism name" value="human"/>
</dbReference>
<dbReference type="AGR" id="HGNC:236"/>
<dbReference type="CTD" id="111"/>
<dbReference type="DisGeNET" id="111"/>
<dbReference type="GeneCards" id="ADCY5"/>
<dbReference type="GeneReviews" id="ADCY5"/>
<dbReference type="HGNC" id="HGNC:236">
    <property type="gene designation" value="ADCY5"/>
</dbReference>
<dbReference type="HPA" id="ENSG00000173175">
    <property type="expression patterns" value="Tissue enhanced (brain, heart muscle)"/>
</dbReference>
<dbReference type="MalaCards" id="ADCY5"/>
<dbReference type="MIM" id="600293">
    <property type="type" value="gene"/>
</dbReference>
<dbReference type="MIM" id="606703">
    <property type="type" value="phenotype"/>
</dbReference>
<dbReference type="MIM" id="619647">
    <property type="type" value="phenotype"/>
</dbReference>
<dbReference type="MIM" id="619651">
    <property type="type" value="phenotype"/>
</dbReference>
<dbReference type="neXtProt" id="NX_O95622"/>
<dbReference type="OpenTargets" id="ENSG00000173175"/>
<dbReference type="Orphanet" id="1429">
    <property type="disease" value="Benign hereditary chorea"/>
</dbReference>
<dbReference type="Orphanet" id="324588">
    <property type="disease" value="Familial dyskinesia and facial myokymia"/>
</dbReference>
<dbReference type="PharmGKB" id="PA24563"/>
<dbReference type="VEuPathDB" id="HostDB:ENSG00000173175"/>
<dbReference type="eggNOG" id="KOG3619">
    <property type="taxonomic scope" value="Eukaryota"/>
</dbReference>
<dbReference type="GeneTree" id="ENSGT00940000158054"/>
<dbReference type="HOGENOM" id="CLU_001072_2_0_1"/>
<dbReference type="InParanoid" id="O95622"/>
<dbReference type="OMA" id="HNSSHWT"/>
<dbReference type="OrthoDB" id="10261550at2759"/>
<dbReference type="PAN-GO" id="O95622">
    <property type="GO annotations" value="5 GO annotations based on evolutionary models"/>
</dbReference>
<dbReference type="PhylomeDB" id="O95622"/>
<dbReference type="TreeFam" id="TF313845"/>
<dbReference type="BRENDA" id="4.6.1.1">
    <property type="organism ID" value="2681"/>
</dbReference>
<dbReference type="PathwayCommons" id="O95622"/>
<dbReference type="Reactome" id="R-HSA-163359">
    <property type="pathway name" value="Glucagon signaling in metabolic regulation"/>
</dbReference>
<dbReference type="Reactome" id="R-HSA-163615">
    <property type="pathway name" value="PKA activation"/>
</dbReference>
<dbReference type="Reactome" id="R-HSA-164378">
    <property type="pathway name" value="PKA activation in glucagon signalling"/>
</dbReference>
<dbReference type="Reactome" id="R-HSA-170660">
    <property type="pathway name" value="Adenylate cyclase activating pathway"/>
</dbReference>
<dbReference type="Reactome" id="R-HSA-170670">
    <property type="pathway name" value="Adenylate cyclase inhibitory pathway"/>
</dbReference>
<dbReference type="Reactome" id="R-HSA-381676">
    <property type="pathway name" value="Glucagon-like Peptide-1 (GLP1) regulates insulin secretion"/>
</dbReference>
<dbReference type="Reactome" id="R-HSA-400042">
    <property type="pathway name" value="Adrenaline,noradrenaline inhibits insulin secretion"/>
</dbReference>
<dbReference type="Reactome" id="R-HSA-418555">
    <property type="pathway name" value="G alpha (s) signalling events"/>
</dbReference>
<dbReference type="Reactome" id="R-HSA-418594">
    <property type="pathway name" value="G alpha (i) signalling events"/>
</dbReference>
<dbReference type="Reactome" id="R-HSA-418597">
    <property type="pathway name" value="G alpha (z) signalling events"/>
</dbReference>
<dbReference type="Reactome" id="R-HSA-432040">
    <property type="pathway name" value="Vasopressin regulates renal water homeostasis via Aquaporins"/>
</dbReference>
<dbReference type="Reactome" id="R-HSA-5610787">
    <property type="pathway name" value="Hedgehog 'off' state"/>
</dbReference>
<dbReference type="Reactome" id="R-HSA-9634597">
    <property type="pathway name" value="GPER1 signaling"/>
</dbReference>
<dbReference type="Reactome" id="R-HSA-9660821">
    <property type="pathway name" value="ADORA2B mediated anti-inflammatory cytokines production"/>
</dbReference>
<dbReference type="Reactome" id="R-HSA-9664323">
    <property type="pathway name" value="FCGR3A-mediated IL10 synthesis"/>
</dbReference>
<dbReference type="Reactome" id="R-HSA-9856530">
    <property type="pathway name" value="High laminar flow shear stress activates signaling by PIEZO1 and PECAM1:CDH5:KDR in endothelial cells"/>
</dbReference>
<dbReference type="SignaLink" id="O95622"/>
<dbReference type="SIGNOR" id="O95622"/>
<dbReference type="BioGRID-ORCS" id="111">
    <property type="hits" value="12 hits in 1149 CRISPR screens"/>
</dbReference>
<dbReference type="ChiTaRS" id="ADCY5">
    <property type="organism name" value="human"/>
</dbReference>
<dbReference type="GeneWiki" id="ADCY5"/>
<dbReference type="GenomeRNAi" id="111"/>
<dbReference type="Pharos" id="O95622">
    <property type="development level" value="Tchem"/>
</dbReference>
<dbReference type="PRO" id="PR:O95622"/>
<dbReference type="Proteomes" id="UP000005640">
    <property type="component" value="Chromosome 3"/>
</dbReference>
<dbReference type="RNAct" id="O95622">
    <property type="molecule type" value="protein"/>
</dbReference>
<dbReference type="Bgee" id="ENSG00000173175">
    <property type="expression patterns" value="Expressed in apex of heart and 127 other cell types or tissues"/>
</dbReference>
<dbReference type="ExpressionAtlas" id="O95622">
    <property type="expression patterns" value="baseline and differential"/>
</dbReference>
<dbReference type="GO" id="GO:0005929">
    <property type="term" value="C:cilium"/>
    <property type="evidence" value="ECO:0000250"/>
    <property type="project" value="UniProtKB"/>
</dbReference>
<dbReference type="GO" id="GO:0016020">
    <property type="term" value="C:membrane"/>
    <property type="evidence" value="ECO:0000314"/>
    <property type="project" value="UniProtKB"/>
</dbReference>
<dbReference type="GO" id="GO:0005886">
    <property type="term" value="C:plasma membrane"/>
    <property type="evidence" value="ECO:0000250"/>
    <property type="project" value="BHF-UCL"/>
</dbReference>
<dbReference type="GO" id="GO:0004016">
    <property type="term" value="F:adenylate cyclase activity"/>
    <property type="evidence" value="ECO:0000314"/>
    <property type="project" value="UniProtKB"/>
</dbReference>
<dbReference type="GO" id="GO:0008179">
    <property type="term" value="F:adenylate cyclase binding"/>
    <property type="evidence" value="ECO:0000250"/>
    <property type="project" value="BHF-UCL"/>
</dbReference>
<dbReference type="GO" id="GO:0005524">
    <property type="term" value="F:ATP binding"/>
    <property type="evidence" value="ECO:0007669"/>
    <property type="project" value="UniProtKB-KW"/>
</dbReference>
<dbReference type="GO" id="GO:0046872">
    <property type="term" value="F:metal ion binding"/>
    <property type="evidence" value="ECO:0007669"/>
    <property type="project" value="UniProtKB-KW"/>
</dbReference>
<dbReference type="GO" id="GO:0097110">
    <property type="term" value="F:scaffold protein binding"/>
    <property type="evidence" value="ECO:0007669"/>
    <property type="project" value="Ensembl"/>
</dbReference>
<dbReference type="GO" id="GO:0007191">
    <property type="term" value="P:adenylate cyclase-activating dopamine receptor signaling pathway"/>
    <property type="evidence" value="ECO:0007669"/>
    <property type="project" value="Ensembl"/>
</dbReference>
<dbReference type="GO" id="GO:0007189">
    <property type="term" value="P:adenylate cyclase-activating G protein-coupled receptor signaling pathway"/>
    <property type="evidence" value="ECO:0000315"/>
    <property type="project" value="UniProtKB"/>
</dbReference>
<dbReference type="GO" id="GO:0007195">
    <property type="term" value="P:adenylate cyclase-inhibiting dopamine receptor signaling pathway"/>
    <property type="evidence" value="ECO:0007669"/>
    <property type="project" value="Ensembl"/>
</dbReference>
<dbReference type="GO" id="GO:0006171">
    <property type="term" value="P:cAMP biosynthetic process"/>
    <property type="evidence" value="ECO:0000314"/>
    <property type="project" value="UniProtKB"/>
</dbReference>
<dbReference type="GO" id="GO:1904322">
    <property type="term" value="P:cellular response to forskolin"/>
    <property type="evidence" value="ECO:0000314"/>
    <property type="project" value="UniProtKB"/>
</dbReference>
<dbReference type="GO" id="GO:0001973">
    <property type="term" value="P:G protein-coupled adenosine receptor signaling pathway"/>
    <property type="evidence" value="ECO:0007669"/>
    <property type="project" value="Ensembl"/>
</dbReference>
<dbReference type="GO" id="GO:0035556">
    <property type="term" value="P:intracellular signal transduction"/>
    <property type="evidence" value="ECO:0007669"/>
    <property type="project" value="InterPro"/>
</dbReference>
<dbReference type="GO" id="GO:0007626">
    <property type="term" value="P:locomotory behavior"/>
    <property type="evidence" value="ECO:0007669"/>
    <property type="project" value="Ensembl"/>
</dbReference>
<dbReference type="GO" id="GO:0050885">
    <property type="term" value="P:neuromuscular process controlling balance"/>
    <property type="evidence" value="ECO:0007669"/>
    <property type="project" value="Ensembl"/>
</dbReference>
<dbReference type="GO" id="GO:0007204">
    <property type="term" value="P:positive regulation of cytosolic calcium ion concentration"/>
    <property type="evidence" value="ECO:0000315"/>
    <property type="project" value="UniProtKB"/>
</dbReference>
<dbReference type="GO" id="GO:0061178">
    <property type="term" value="P:regulation of insulin secretion involved in cellular response to glucose stimulus"/>
    <property type="evidence" value="ECO:0000315"/>
    <property type="project" value="UniProtKB"/>
</dbReference>
<dbReference type="CDD" id="cd07302">
    <property type="entry name" value="CHD"/>
    <property type="match status" value="1"/>
</dbReference>
<dbReference type="CDD" id="cd07556">
    <property type="entry name" value="Nucleotidyl_cyc_III"/>
    <property type="match status" value="1"/>
</dbReference>
<dbReference type="FunFam" id="3.30.70.1230:FF:000001">
    <property type="entry name" value="Adenylate cyclase"/>
    <property type="match status" value="1"/>
</dbReference>
<dbReference type="FunFam" id="3.30.70.1230:FF:000002">
    <property type="entry name" value="Adenylate cyclase"/>
    <property type="match status" value="1"/>
</dbReference>
<dbReference type="Gene3D" id="3.30.70.1230">
    <property type="entry name" value="Nucleotide cyclase"/>
    <property type="match status" value="2"/>
</dbReference>
<dbReference type="InterPro" id="IPR001054">
    <property type="entry name" value="A/G_cyclase"/>
</dbReference>
<dbReference type="InterPro" id="IPR018297">
    <property type="entry name" value="A/G_cyclase_CS"/>
</dbReference>
<dbReference type="InterPro" id="IPR032628">
    <property type="entry name" value="AC_N"/>
</dbReference>
<dbReference type="InterPro" id="IPR030672">
    <property type="entry name" value="Adcy"/>
</dbReference>
<dbReference type="InterPro" id="IPR009398">
    <property type="entry name" value="Adcy_conserved_dom"/>
</dbReference>
<dbReference type="InterPro" id="IPR029787">
    <property type="entry name" value="Nucleotide_cyclase"/>
</dbReference>
<dbReference type="PANTHER" id="PTHR45627">
    <property type="entry name" value="ADENYLATE CYCLASE TYPE 1"/>
    <property type="match status" value="1"/>
</dbReference>
<dbReference type="PANTHER" id="PTHR45627:SF7">
    <property type="entry name" value="ADENYLATE CYCLASE TYPE 5"/>
    <property type="match status" value="1"/>
</dbReference>
<dbReference type="Pfam" id="PF16214">
    <property type="entry name" value="AC_N"/>
    <property type="match status" value="1"/>
</dbReference>
<dbReference type="Pfam" id="PF06327">
    <property type="entry name" value="Adcy_cons_dom"/>
    <property type="match status" value="1"/>
</dbReference>
<dbReference type="Pfam" id="PF00211">
    <property type="entry name" value="Guanylate_cyc"/>
    <property type="match status" value="2"/>
</dbReference>
<dbReference type="PIRSF" id="PIRSF039050">
    <property type="entry name" value="Ade_cyc"/>
    <property type="match status" value="1"/>
</dbReference>
<dbReference type="SMART" id="SM00044">
    <property type="entry name" value="CYCc"/>
    <property type="match status" value="2"/>
</dbReference>
<dbReference type="SUPFAM" id="SSF55073">
    <property type="entry name" value="Nucleotide cyclase"/>
    <property type="match status" value="2"/>
</dbReference>
<dbReference type="PROSITE" id="PS00452">
    <property type="entry name" value="GUANYLATE_CYCLASE_1"/>
    <property type="match status" value="2"/>
</dbReference>
<dbReference type="PROSITE" id="PS50125">
    <property type="entry name" value="GUANYLATE_CYCLASE_2"/>
    <property type="match status" value="2"/>
</dbReference>
<accession>O95622</accession>
<accession>B7Z8A6</accession>
<accession>Q7RTV7</accession>
<accession>Q8NFM3</accession>
<name>ADCY5_HUMAN</name>